<feature type="signal peptide" evidence="1">
    <location>
        <begin position="1"/>
        <end position="43"/>
    </location>
</feature>
<feature type="chain" id="PRO_0000106096" description="Non-structural protein 7a">
    <location>
        <begin position="44"/>
        <end position="101"/>
    </location>
</feature>
<feature type="transmembrane region" description="Helical" evidence="1">
    <location>
        <begin position="76"/>
        <end position="96"/>
    </location>
</feature>
<feature type="sequence variant">
    <original>L</original>
    <variation>M</variation>
    <location>
        <position position="32"/>
    </location>
</feature>
<comment type="function">
    <text>May function in the formation of membrane-bound replication complexes or in the assembly of the virus.</text>
</comment>
<comment type="subcellular location">
    <subcellularLocation>
        <location evidence="2">Host membrane</location>
        <topology evidence="2">Single-pass membrane protein</topology>
    </subcellularLocation>
</comment>
<comment type="similarity">
    <text evidence="2">Belongs to the coronaviruses ns7/ns7a protein family.</text>
</comment>
<accession>P19742</accession>
<accession>Q52PB0</accession>
<gene>
    <name type="ORF">7a</name>
</gene>
<reference key="1">
    <citation type="journal article" date="1988" name="Virology">
        <title>Sequence analysis of the 3'-end of the feline coronavirus FIPV 79-1146 genome: comparison with the genome of porcine coronavirus TGEV reveals large insertions.</title>
        <authorList>
            <person name="de Groot R.J."/>
            <person name="Andeweg A.C."/>
            <person name="Horzinek M.C."/>
            <person name="Spaan W.J.M."/>
        </authorList>
    </citation>
    <scope>NUCLEOTIDE SEQUENCE [MRNA]</scope>
</reference>
<reference key="2">
    <citation type="journal article" date="2005" name="J. Gen. Virol.">
        <title>Genomic RNA sequence of Feline coronavirus strain FIPV WSU-79/1146.</title>
        <authorList>
            <person name="Dye C."/>
            <person name="Siddell S.G."/>
        </authorList>
    </citation>
    <scope>NUCLEOTIDE SEQUENCE [GENOMIC RNA]</scope>
</reference>
<reference key="3">
    <citation type="submission" date="2005-03" db="EMBL/GenBank/DDBJ databases">
        <authorList>
            <person name="Haijema B.J."/>
            <person name="de Groot-Mijnes J.D.F."/>
            <person name="Vennema H."/>
            <person name="Raamsman M.J."/>
            <person name="Rottier P.J.M."/>
            <person name="de Groot R.J."/>
        </authorList>
    </citation>
    <scope>NUCLEOTIDE SEQUENCE [GENOMIC RNA]</scope>
</reference>
<organismHost>
    <name type="scientific">Felidae</name>
    <name type="common">cat family</name>
    <dbReference type="NCBI Taxonomy" id="9681"/>
</organismHost>
<name>NS7_FIPV</name>
<keyword id="KW-1043">Host membrane</keyword>
<keyword id="KW-0472">Membrane</keyword>
<keyword id="KW-1185">Reference proteome</keyword>
<keyword id="KW-0732">Signal</keyword>
<keyword id="KW-0812">Transmembrane</keyword>
<keyword id="KW-1133">Transmembrane helix</keyword>
<evidence type="ECO:0000255" key="1"/>
<evidence type="ECO:0000305" key="2"/>
<dbReference type="EMBL" id="M23694">
    <property type="protein sequence ID" value="AAA43063.1"/>
    <property type="molecule type" value="mRNA"/>
</dbReference>
<dbReference type="EMBL" id="DQ010921">
    <property type="status" value="NOT_ANNOTATED_CDS"/>
    <property type="molecule type" value="Genomic_RNA"/>
</dbReference>
<dbReference type="EMBL" id="AY994055">
    <property type="protein sequence ID" value="AAY16381.1"/>
    <property type="molecule type" value="Genomic_RNA"/>
</dbReference>
<dbReference type="PIR" id="A31825">
    <property type="entry name" value="WMIHFI"/>
</dbReference>
<dbReference type="SMR" id="P19742"/>
<dbReference type="KEGG" id="vg:10040187"/>
<dbReference type="Proteomes" id="UP000000835">
    <property type="component" value="Segment"/>
</dbReference>
<dbReference type="Proteomes" id="UP000140386">
    <property type="component" value="Genome"/>
</dbReference>
<dbReference type="GO" id="GO:0033644">
    <property type="term" value="C:host cell membrane"/>
    <property type="evidence" value="ECO:0007669"/>
    <property type="project" value="UniProtKB-SubCell"/>
</dbReference>
<dbReference type="GO" id="GO:0016020">
    <property type="term" value="C:membrane"/>
    <property type="evidence" value="ECO:0007669"/>
    <property type="project" value="UniProtKB-KW"/>
</dbReference>
<dbReference type="InterPro" id="IPR003449">
    <property type="entry name" value="Corona_7"/>
</dbReference>
<dbReference type="Pfam" id="PF02398">
    <property type="entry name" value="Corona_7"/>
    <property type="match status" value="1"/>
</dbReference>
<protein>
    <recommendedName>
        <fullName>Non-structural protein 7a</fullName>
        <shortName>ns7a</shortName>
    </recommendedName>
    <alternativeName>
        <fullName>11 kDa protein</fullName>
    </alternativeName>
    <alternativeName>
        <fullName>Accessory protein 7a</fullName>
    </alternativeName>
</protein>
<sequence>MLVFVHAVLVTALILLLIGRIQLLERLLLSHLLNLTTVSNVLGVPDSSLRVNCLQLLKPDCLDFNILHKVLAETRLLVVVLRVIFLVLLGFSCYTLLGALF</sequence>
<organism>
    <name type="scientific">Feline coronavirus (strain FIPV WSU-79/1146)</name>
    <name type="common">FCoV</name>
    <dbReference type="NCBI Taxonomy" id="33734"/>
    <lineage>
        <taxon>Viruses</taxon>
        <taxon>Riboviria</taxon>
        <taxon>Orthornavirae</taxon>
        <taxon>Pisuviricota</taxon>
        <taxon>Pisoniviricetes</taxon>
        <taxon>Nidovirales</taxon>
        <taxon>Cornidovirineae</taxon>
        <taxon>Coronaviridae</taxon>
        <taxon>Orthocoronavirinae</taxon>
        <taxon>Alphacoronavirus</taxon>
        <taxon>Tegacovirus</taxon>
        <taxon>Alphacoronavirus 1</taxon>
    </lineage>
</organism>
<proteinExistence type="inferred from homology"/>